<dbReference type="EC" id="3.2.2.23" evidence="2"/>
<dbReference type="EC" id="4.2.99.18" evidence="2"/>
<dbReference type="EMBL" id="CP000947">
    <property type="protein sequence ID" value="ACA30922.1"/>
    <property type="molecule type" value="Genomic_DNA"/>
</dbReference>
<dbReference type="RefSeq" id="WP_012340376.1">
    <property type="nucleotide sequence ID" value="NC_010519.1"/>
</dbReference>
<dbReference type="SMR" id="B0UUX0"/>
<dbReference type="STRING" id="228400.HSM_0012"/>
<dbReference type="GeneID" id="31486287"/>
<dbReference type="KEGG" id="hsm:HSM_0012"/>
<dbReference type="HOGENOM" id="CLU_038423_1_1_6"/>
<dbReference type="GO" id="GO:0034039">
    <property type="term" value="F:8-oxo-7,8-dihydroguanine DNA N-glycosylase activity"/>
    <property type="evidence" value="ECO:0007669"/>
    <property type="project" value="TreeGrafter"/>
</dbReference>
<dbReference type="GO" id="GO:0140078">
    <property type="term" value="F:class I DNA-(apurinic or apyrimidinic site) endonuclease activity"/>
    <property type="evidence" value="ECO:0007669"/>
    <property type="project" value="UniProtKB-EC"/>
</dbReference>
<dbReference type="GO" id="GO:0003684">
    <property type="term" value="F:damaged DNA binding"/>
    <property type="evidence" value="ECO:0007669"/>
    <property type="project" value="InterPro"/>
</dbReference>
<dbReference type="GO" id="GO:0008270">
    <property type="term" value="F:zinc ion binding"/>
    <property type="evidence" value="ECO:0007669"/>
    <property type="project" value="UniProtKB-UniRule"/>
</dbReference>
<dbReference type="GO" id="GO:0006284">
    <property type="term" value="P:base-excision repair"/>
    <property type="evidence" value="ECO:0007669"/>
    <property type="project" value="InterPro"/>
</dbReference>
<dbReference type="CDD" id="cd08966">
    <property type="entry name" value="EcFpg-like_N"/>
    <property type="match status" value="1"/>
</dbReference>
<dbReference type="FunFam" id="1.10.8.50:FF:000003">
    <property type="entry name" value="Formamidopyrimidine-DNA glycosylase"/>
    <property type="match status" value="1"/>
</dbReference>
<dbReference type="FunFam" id="3.20.190.10:FF:000001">
    <property type="entry name" value="Formamidopyrimidine-DNA glycosylase"/>
    <property type="match status" value="1"/>
</dbReference>
<dbReference type="Gene3D" id="1.10.8.50">
    <property type="match status" value="1"/>
</dbReference>
<dbReference type="Gene3D" id="3.20.190.10">
    <property type="entry name" value="MutM-like, N-terminal"/>
    <property type="match status" value="1"/>
</dbReference>
<dbReference type="HAMAP" id="MF_00103">
    <property type="entry name" value="Fapy_DNA_glycosyl"/>
    <property type="match status" value="1"/>
</dbReference>
<dbReference type="InterPro" id="IPR015886">
    <property type="entry name" value="DNA_glyclase/AP_lyase_DNA-bd"/>
</dbReference>
<dbReference type="InterPro" id="IPR015887">
    <property type="entry name" value="DNA_glyclase_Znf_dom_DNA_BS"/>
</dbReference>
<dbReference type="InterPro" id="IPR020629">
    <property type="entry name" value="Formamido-pyr_DNA_Glyclase"/>
</dbReference>
<dbReference type="InterPro" id="IPR012319">
    <property type="entry name" value="FPG_cat"/>
</dbReference>
<dbReference type="InterPro" id="IPR035937">
    <property type="entry name" value="MutM-like_N-ter"/>
</dbReference>
<dbReference type="InterPro" id="IPR010979">
    <property type="entry name" value="Ribosomal_uS13-like_H2TH"/>
</dbReference>
<dbReference type="InterPro" id="IPR000214">
    <property type="entry name" value="Znf_DNA_glyclase/AP_lyase"/>
</dbReference>
<dbReference type="InterPro" id="IPR010663">
    <property type="entry name" value="Znf_FPG/IleRS"/>
</dbReference>
<dbReference type="NCBIfam" id="TIGR00577">
    <property type="entry name" value="fpg"/>
    <property type="match status" value="1"/>
</dbReference>
<dbReference type="NCBIfam" id="NF002211">
    <property type="entry name" value="PRK01103.1"/>
    <property type="match status" value="1"/>
</dbReference>
<dbReference type="PANTHER" id="PTHR22993">
    <property type="entry name" value="FORMAMIDOPYRIMIDINE-DNA GLYCOSYLASE"/>
    <property type="match status" value="1"/>
</dbReference>
<dbReference type="PANTHER" id="PTHR22993:SF9">
    <property type="entry name" value="FORMAMIDOPYRIMIDINE-DNA GLYCOSYLASE"/>
    <property type="match status" value="1"/>
</dbReference>
<dbReference type="Pfam" id="PF01149">
    <property type="entry name" value="Fapy_DNA_glyco"/>
    <property type="match status" value="1"/>
</dbReference>
<dbReference type="Pfam" id="PF06831">
    <property type="entry name" value="H2TH"/>
    <property type="match status" value="1"/>
</dbReference>
<dbReference type="Pfam" id="PF06827">
    <property type="entry name" value="zf-FPG_IleRS"/>
    <property type="match status" value="1"/>
</dbReference>
<dbReference type="SMART" id="SM00898">
    <property type="entry name" value="Fapy_DNA_glyco"/>
    <property type="match status" value="1"/>
</dbReference>
<dbReference type="SMART" id="SM01232">
    <property type="entry name" value="H2TH"/>
    <property type="match status" value="1"/>
</dbReference>
<dbReference type="SUPFAM" id="SSF57716">
    <property type="entry name" value="Glucocorticoid receptor-like (DNA-binding domain)"/>
    <property type="match status" value="1"/>
</dbReference>
<dbReference type="SUPFAM" id="SSF81624">
    <property type="entry name" value="N-terminal domain of MutM-like DNA repair proteins"/>
    <property type="match status" value="1"/>
</dbReference>
<dbReference type="SUPFAM" id="SSF46946">
    <property type="entry name" value="S13-like H2TH domain"/>
    <property type="match status" value="1"/>
</dbReference>
<dbReference type="PROSITE" id="PS51068">
    <property type="entry name" value="FPG_CAT"/>
    <property type="match status" value="1"/>
</dbReference>
<dbReference type="PROSITE" id="PS01242">
    <property type="entry name" value="ZF_FPG_1"/>
    <property type="match status" value="1"/>
</dbReference>
<dbReference type="PROSITE" id="PS51066">
    <property type="entry name" value="ZF_FPG_2"/>
    <property type="match status" value="1"/>
</dbReference>
<name>FPG_HISS2</name>
<proteinExistence type="inferred from homology"/>
<accession>B0UUX0</accession>
<feature type="initiator methionine" description="Removed" evidence="1">
    <location>
        <position position="1"/>
    </location>
</feature>
<feature type="chain" id="PRO_1000075700" description="Formamidopyrimidine-DNA glycosylase">
    <location>
        <begin position="2"/>
        <end position="270"/>
    </location>
</feature>
<feature type="zinc finger region" description="FPG-type" evidence="2">
    <location>
        <begin position="235"/>
        <end position="269"/>
    </location>
</feature>
<feature type="active site" description="Schiff-base intermediate with DNA" evidence="2">
    <location>
        <position position="2"/>
    </location>
</feature>
<feature type="active site" description="Proton donor" evidence="2">
    <location>
        <position position="3"/>
    </location>
</feature>
<feature type="active site" description="Proton donor; for beta-elimination activity" evidence="2">
    <location>
        <position position="57"/>
    </location>
</feature>
<feature type="active site" description="Proton donor; for delta-elimination activity" evidence="2">
    <location>
        <position position="259"/>
    </location>
</feature>
<feature type="binding site" evidence="2">
    <location>
        <position position="90"/>
    </location>
    <ligand>
        <name>DNA</name>
        <dbReference type="ChEBI" id="CHEBI:16991"/>
    </ligand>
</feature>
<feature type="binding site" evidence="2">
    <location>
        <position position="109"/>
    </location>
    <ligand>
        <name>DNA</name>
        <dbReference type="ChEBI" id="CHEBI:16991"/>
    </ligand>
</feature>
<feature type="binding site" evidence="2">
    <location>
        <position position="150"/>
    </location>
    <ligand>
        <name>DNA</name>
        <dbReference type="ChEBI" id="CHEBI:16991"/>
    </ligand>
</feature>
<keyword id="KW-0227">DNA damage</keyword>
<keyword id="KW-0234">DNA repair</keyword>
<keyword id="KW-0238">DNA-binding</keyword>
<keyword id="KW-0326">Glycosidase</keyword>
<keyword id="KW-0378">Hydrolase</keyword>
<keyword id="KW-0456">Lyase</keyword>
<keyword id="KW-0479">Metal-binding</keyword>
<keyword id="KW-0511">Multifunctional enzyme</keyword>
<keyword id="KW-0862">Zinc</keyword>
<keyword id="KW-0863">Zinc-finger</keyword>
<gene>
    <name evidence="2" type="primary">mutM</name>
    <name evidence="2" type="synonym">fpg</name>
    <name type="ordered locus">HSM_0012</name>
</gene>
<reference key="1">
    <citation type="submission" date="2008-02" db="EMBL/GenBank/DDBJ databases">
        <title>Complete sequence of Haemophilus somnus 2336.</title>
        <authorList>
            <consortium name="US DOE Joint Genome Institute"/>
            <person name="Siddaramappa S."/>
            <person name="Duncan A.J."/>
            <person name="Challacombe J.F."/>
            <person name="Rainey D."/>
            <person name="Gillaspy A.F."/>
            <person name="Carson M."/>
            <person name="Gipson J."/>
            <person name="Gipson M."/>
            <person name="Bruce D."/>
            <person name="Detter J.C."/>
            <person name="Han C.S."/>
            <person name="Land M."/>
            <person name="Tapia R."/>
            <person name="Thompson L.S."/>
            <person name="Orvis J."/>
            <person name="Zaitshik J."/>
            <person name="Barnes G."/>
            <person name="Brettin T.S."/>
            <person name="Dyer D.W."/>
            <person name="Inzana T.J."/>
        </authorList>
    </citation>
    <scope>NUCLEOTIDE SEQUENCE [LARGE SCALE GENOMIC DNA]</scope>
    <source>
        <strain>2336</strain>
    </source>
</reference>
<evidence type="ECO:0000250" key="1"/>
<evidence type="ECO:0000255" key="2">
    <source>
        <dbReference type="HAMAP-Rule" id="MF_00103"/>
    </source>
</evidence>
<protein>
    <recommendedName>
        <fullName evidence="2">Formamidopyrimidine-DNA glycosylase</fullName>
        <shortName evidence="2">Fapy-DNA glycosylase</shortName>
        <ecNumber evidence="2">3.2.2.23</ecNumber>
    </recommendedName>
    <alternativeName>
        <fullName evidence="2">DNA-(apurinic or apyrimidinic site) lyase MutM</fullName>
        <shortName evidence="2">AP lyase MutM</shortName>
        <ecNumber evidence="2">4.2.99.18</ecNumber>
    </alternativeName>
</protein>
<comment type="function">
    <text evidence="2">Involved in base excision repair of DNA damaged by oxidation or by mutagenic agents. Acts as a DNA glycosylase that recognizes and removes damaged bases. Has a preference for oxidized purines, such as 7,8-dihydro-8-oxoguanine (8-oxoG). Has AP (apurinic/apyrimidinic) lyase activity and introduces nicks in the DNA strand. Cleaves the DNA backbone by beta-delta elimination to generate a single-strand break at the site of the removed base with both 3'- and 5'-phosphates.</text>
</comment>
<comment type="catalytic activity">
    <reaction evidence="2">
        <text>Hydrolysis of DNA containing ring-opened 7-methylguanine residues, releasing 2,6-diamino-4-hydroxy-5-(N-methyl)formamidopyrimidine.</text>
        <dbReference type="EC" id="3.2.2.23"/>
    </reaction>
</comment>
<comment type="catalytic activity">
    <reaction evidence="2">
        <text>2'-deoxyribonucleotide-(2'-deoxyribose 5'-phosphate)-2'-deoxyribonucleotide-DNA = a 3'-end 2'-deoxyribonucleotide-(2,3-dehydro-2,3-deoxyribose 5'-phosphate)-DNA + a 5'-end 5'-phospho-2'-deoxyribonucleoside-DNA + H(+)</text>
        <dbReference type="Rhea" id="RHEA:66592"/>
        <dbReference type="Rhea" id="RHEA-COMP:13180"/>
        <dbReference type="Rhea" id="RHEA-COMP:16897"/>
        <dbReference type="Rhea" id="RHEA-COMP:17067"/>
        <dbReference type="ChEBI" id="CHEBI:15378"/>
        <dbReference type="ChEBI" id="CHEBI:136412"/>
        <dbReference type="ChEBI" id="CHEBI:157695"/>
        <dbReference type="ChEBI" id="CHEBI:167181"/>
        <dbReference type="EC" id="4.2.99.18"/>
    </reaction>
</comment>
<comment type="cofactor">
    <cofactor evidence="2">
        <name>Zn(2+)</name>
        <dbReference type="ChEBI" id="CHEBI:29105"/>
    </cofactor>
    <text evidence="2">Binds 1 zinc ion per subunit.</text>
</comment>
<comment type="subunit">
    <text evidence="2">Monomer.</text>
</comment>
<comment type="similarity">
    <text evidence="2">Belongs to the FPG family.</text>
</comment>
<organism>
    <name type="scientific">Histophilus somni (strain 2336)</name>
    <name type="common">Haemophilus somnus</name>
    <dbReference type="NCBI Taxonomy" id="228400"/>
    <lineage>
        <taxon>Bacteria</taxon>
        <taxon>Pseudomonadati</taxon>
        <taxon>Pseudomonadota</taxon>
        <taxon>Gammaproteobacteria</taxon>
        <taxon>Pasteurellales</taxon>
        <taxon>Pasteurellaceae</taxon>
        <taxon>Histophilus</taxon>
    </lineage>
</organism>
<sequence length="270" mass="30909">MPELPEVETTLKGVSPYLKGFIIEKIVVRNPKLRWEVSKELSTFKHVKILNLTRRAKYLIIHTEQGYIIGHLGMSGSVRIVPHDNPVNKHDHFDIVMNNGKLLRYNDARRFGAWLWTNNLSEFHLFFKLGPEPLSETFNSTYLFKKSRQKSTALKTFLMDNSVVVGVGNIYANEILFLCGLHPQKIAKTLTKKQTEQLVFTIKQVLNEAIEQGGTTLKDFLQPDGRPGYFAQKLLVYGNKDKPCPRCGTKIKSIIIGQRNSFFCPQCQKK</sequence>